<keyword id="KW-0963">Cytoplasm</keyword>
<keyword id="KW-0539">Nucleus</keyword>
<keyword id="KW-0647">Proteasome</keyword>
<keyword id="KW-1185">Reference proteome</keyword>
<feature type="chain" id="PRO_0000124096" description="Proteasome subunit alpha type-3">
    <location>
        <begin position="1"/>
        <end position="248"/>
    </location>
</feature>
<feature type="sequence conflict" description="In Ref. 1; AAB03671." evidence="3" ref="1">
    <original>KIK</original>
    <variation>EIR</variation>
    <location>
        <begin position="178"/>
        <end position="180"/>
    </location>
</feature>
<feature type="sequence conflict" description="In Ref. 1; AAB03671." evidence="3" ref="1">
    <original>N</original>
    <variation>D</variation>
    <location>
        <position position="221"/>
    </location>
</feature>
<feature type="sequence conflict" description="In Ref. 1; AAB03671." evidence="3" ref="1">
    <original>A</original>
    <variation>G</variation>
    <location>
        <position position="235"/>
    </location>
</feature>
<proteinExistence type="evidence at transcript level"/>
<organism>
    <name type="scientific">Dictyostelium discoideum</name>
    <name type="common">Social amoeba</name>
    <dbReference type="NCBI Taxonomy" id="44689"/>
    <lineage>
        <taxon>Eukaryota</taxon>
        <taxon>Amoebozoa</taxon>
        <taxon>Evosea</taxon>
        <taxon>Eumycetozoa</taxon>
        <taxon>Dictyostelia</taxon>
        <taxon>Dictyosteliales</taxon>
        <taxon>Dictyosteliaceae</taxon>
        <taxon>Dictyostelium</taxon>
    </lineage>
</organism>
<sequence length="248" mass="27238">MSSVGSGYDLYVSTYSPDGKLFQVDYANKAVENSGTLVAIKAKDGVVLGVEKLVPSKMLCSGSNRRVHHIDTHVGVAIAGFLADARQLITRARSEAKNYKSTYGQPIPIKVLSQRIASYNHMHTLYGSVRPFGCSIAITGIDQYGPQLFLVEPSGSCVGYFGASLGKGKQAAKNELEKIKFSEMTCREAIKEVSRIIYSVHDEVKDKDFELELGWISTETNNVHQIVPKELHDEAEAYAKQSLEDANM</sequence>
<gene>
    <name type="primary">psmA3</name>
    <name type="synonym">prtD</name>
    <name type="ORF">DDB_G0267408</name>
</gene>
<evidence type="ECO:0000250" key="1"/>
<evidence type="ECO:0000255" key="2">
    <source>
        <dbReference type="PROSITE-ProRule" id="PRU00808"/>
    </source>
</evidence>
<evidence type="ECO:0000305" key="3"/>
<dbReference type="EMBL" id="U61988">
    <property type="protein sequence ID" value="AAB03671.1"/>
    <property type="molecule type" value="mRNA"/>
</dbReference>
<dbReference type="EMBL" id="AAFI02000003">
    <property type="protein sequence ID" value="EAL73156.1"/>
    <property type="molecule type" value="Genomic_DNA"/>
</dbReference>
<dbReference type="RefSeq" id="XP_647103.1">
    <property type="nucleotide sequence ID" value="XM_642011.1"/>
</dbReference>
<dbReference type="SMR" id="Q27563"/>
<dbReference type="FunCoup" id="Q27563">
    <property type="interactions" value="1241"/>
</dbReference>
<dbReference type="STRING" id="44689.Q27563"/>
<dbReference type="PaxDb" id="44689-DDB0191264"/>
<dbReference type="EnsemblProtists" id="EAL73156">
    <property type="protein sequence ID" value="EAL73156"/>
    <property type="gene ID" value="DDB_G0267408"/>
</dbReference>
<dbReference type="GeneID" id="8615907"/>
<dbReference type="KEGG" id="ddi:DDB_G0267408"/>
<dbReference type="dictyBase" id="DDB_G0267408">
    <property type="gene designation" value="psmA3"/>
</dbReference>
<dbReference type="VEuPathDB" id="AmoebaDB:DDB_G0267408"/>
<dbReference type="eggNOG" id="KOG0184">
    <property type="taxonomic scope" value="Eukaryota"/>
</dbReference>
<dbReference type="HOGENOM" id="CLU_035750_0_0_1"/>
<dbReference type="InParanoid" id="Q27563"/>
<dbReference type="OMA" id="RVSMYMH"/>
<dbReference type="PhylomeDB" id="Q27563"/>
<dbReference type="Reactome" id="R-DDI-1236978">
    <property type="pathway name" value="Cross-presentation of soluble exogenous antigens (endosomes)"/>
</dbReference>
<dbReference type="Reactome" id="R-DDI-174084">
    <property type="pathway name" value="Autodegradation of Cdh1 by Cdh1:APC/C"/>
</dbReference>
<dbReference type="Reactome" id="R-DDI-174154">
    <property type="pathway name" value="APC/C:Cdc20 mediated degradation of Securin"/>
</dbReference>
<dbReference type="Reactome" id="R-DDI-174178">
    <property type="pathway name" value="APC/C:Cdh1 mediated degradation of Cdc20 and other APC/C:Cdh1 targeted proteins in late mitosis/early G1"/>
</dbReference>
<dbReference type="Reactome" id="R-DDI-2467813">
    <property type="pathway name" value="Separation of Sister Chromatids"/>
</dbReference>
<dbReference type="Reactome" id="R-DDI-349425">
    <property type="pathway name" value="Autodegradation of the E3 ubiquitin ligase COP1"/>
</dbReference>
<dbReference type="Reactome" id="R-DDI-382556">
    <property type="pathway name" value="ABC-family proteins mediated transport"/>
</dbReference>
<dbReference type="Reactome" id="R-DDI-450408">
    <property type="pathway name" value="AUF1 (hnRNP D0) binds and destabilizes mRNA"/>
</dbReference>
<dbReference type="Reactome" id="R-DDI-4641258">
    <property type="pathway name" value="Degradation of DVL"/>
</dbReference>
<dbReference type="Reactome" id="R-DDI-5632684">
    <property type="pathway name" value="Hedgehog 'on' state"/>
</dbReference>
<dbReference type="Reactome" id="R-DDI-5658442">
    <property type="pathway name" value="Regulation of RAS by GAPs"/>
</dbReference>
<dbReference type="Reactome" id="R-DDI-5687128">
    <property type="pathway name" value="MAPK6/MAPK4 signaling"/>
</dbReference>
<dbReference type="Reactome" id="R-DDI-5689603">
    <property type="pathway name" value="UCH proteinases"/>
</dbReference>
<dbReference type="Reactome" id="R-DDI-5689880">
    <property type="pathway name" value="Ub-specific processing proteases"/>
</dbReference>
<dbReference type="Reactome" id="R-DDI-68949">
    <property type="pathway name" value="Orc1 removal from chromatin"/>
</dbReference>
<dbReference type="Reactome" id="R-DDI-69017">
    <property type="pathway name" value="CDK-mediated phosphorylation and removal of Cdc6"/>
</dbReference>
<dbReference type="Reactome" id="R-DDI-69601">
    <property type="pathway name" value="Ubiquitin Mediated Degradation of Phosphorylated Cdc25A"/>
</dbReference>
<dbReference type="Reactome" id="R-DDI-8854050">
    <property type="pathway name" value="FBXL7 down-regulates AURKA during mitotic entry and in early mitosis"/>
</dbReference>
<dbReference type="Reactome" id="R-DDI-8948751">
    <property type="pathway name" value="Regulation of PTEN stability and activity"/>
</dbReference>
<dbReference type="Reactome" id="R-DDI-8951664">
    <property type="pathway name" value="Neddylation"/>
</dbReference>
<dbReference type="Reactome" id="R-DDI-9755511">
    <property type="pathway name" value="KEAP1-NFE2L2 pathway"/>
</dbReference>
<dbReference type="Reactome" id="R-DDI-983168">
    <property type="pathway name" value="Antigen processing: Ubiquitination &amp; Proteasome degradation"/>
</dbReference>
<dbReference type="Reactome" id="R-DDI-9907900">
    <property type="pathway name" value="Proteasome assembly"/>
</dbReference>
<dbReference type="PRO" id="PR:Q27563"/>
<dbReference type="Proteomes" id="UP000002195">
    <property type="component" value="Chromosome 1"/>
</dbReference>
<dbReference type="GO" id="GO:0005737">
    <property type="term" value="C:cytoplasm"/>
    <property type="evidence" value="ECO:0000353"/>
    <property type="project" value="dictyBase"/>
</dbReference>
<dbReference type="GO" id="GO:0005634">
    <property type="term" value="C:nucleus"/>
    <property type="evidence" value="ECO:0000353"/>
    <property type="project" value="dictyBase"/>
</dbReference>
<dbReference type="GO" id="GO:0019773">
    <property type="term" value="C:proteasome core complex, alpha-subunit complex"/>
    <property type="evidence" value="ECO:0000314"/>
    <property type="project" value="dictyBase"/>
</dbReference>
<dbReference type="GO" id="GO:0010498">
    <property type="term" value="P:proteasomal protein catabolic process"/>
    <property type="evidence" value="ECO:0000314"/>
    <property type="project" value="dictyBase"/>
</dbReference>
<dbReference type="GO" id="GO:0043161">
    <property type="term" value="P:proteasome-mediated ubiquitin-dependent protein catabolic process"/>
    <property type="evidence" value="ECO:0000318"/>
    <property type="project" value="GO_Central"/>
</dbReference>
<dbReference type="CDD" id="cd03751">
    <property type="entry name" value="proteasome_alpha_type_3"/>
    <property type="match status" value="1"/>
</dbReference>
<dbReference type="FunFam" id="3.60.20.10:FF:000007">
    <property type="entry name" value="Proteasome subunit alpha type"/>
    <property type="match status" value="1"/>
</dbReference>
<dbReference type="Gene3D" id="3.60.20.10">
    <property type="entry name" value="Glutamine Phosphoribosylpyrophosphate, subunit 1, domain 1"/>
    <property type="match status" value="1"/>
</dbReference>
<dbReference type="InterPro" id="IPR029055">
    <property type="entry name" value="Ntn_hydrolases_N"/>
</dbReference>
<dbReference type="InterPro" id="IPR050115">
    <property type="entry name" value="Proteasome_alpha"/>
</dbReference>
<dbReference type="InterPro" id="IPR023332">
    <property type="entry name" value="Proteasome_alpha-type"/>
</dbReference>
<dbReference type="InterPro" id="IPR000426">
    <property type="entry name" value="Proteasome_asu_N"/>
</dbReference>
<dbReference type="InterPro" id="IPR001353">
    <property type="entry name" value="Proteasome_sua/b"/>
</dbReference>
<dbReference type="PANTHER" id="PTHR11599">
    <property type="entry name" value="PROTEASOME SUBUNIT ALPHA/BETA"/>
    <property type="match status" value="1"/>
</dbReference>
<dbReference type="Pfam" id="PF00227">
    <property type="entry name" value="Proteasome"/>
    <property type="match status" value="1"/>
</dbReference>
<dbReference type="Pfam" id="PF10584">
    <property type="entry name" value="Proteasome_A_N"/>
    <property type="match status" value="1"/>
</dbReference>
<dbReference type="SMART" id="SM00948">
    <property type="entry name" value="Proteasome_A_N"/>
    <property type="match status" value="1"/>
</dbReference>
<dbReference type="SUPFAM" id="SSF56235">
    <property type="entry name" value="N-terminal nucleophile aminohydrolases (Ntn hydrolases)"/>
    <property type="match status" value="1"/>
</dbReference>
<dbReference type="PROSITE" id="PS00388">
    <property type="entry name" value="PROTEASOME_ALPHA_1"/>
    <property type="match status" value="1"/>
</dbReference>
<dbReference type="PROSITE" id="PS51475">
    <property type="entry name" value="PROTEASOME_ALPHA_2"/>
    <property type="match status" value="1"/>
</dbReference>
<reference key="1">
    <citation type="journal article" date="1996" name="Proc. Natl. Acad. Sci. U.S.A.">
        <title>Ordered yeast artificial chromosome clones representing the Dictyostelium discoideum genome.</title>
        <authorList>
            <person name="Kuspa A."/>
            <person name="Loomis W.F."/>
        </authorList>
    </citation>
    <scope>NUCLEOTIDE SEQUENCE [LARGE SCALE MRNA]</scope>
    <source>
        <strain>AX4</strain>
    </source>
</reference>
<reference key="2">
    <citation type="journal article" date="2005" name="Nature">
        <title>The genome of the social amoeba Dictyostelium discoideum.</title>
        <authorList>
            <person name="Eichinger L."/>
            <person name="Pachebat J.A."/>
            <person name="Gloeckner G."/>
            <person name="Rajandream M.A."/>
            <person name="Sucgang R."/>
            <person name="Berriman M."/>
            <person name="Song J."/>
            <person name="Olsen R."/>
            <person name="Szafranski K."/>
            <person name="Xu Q."/>
            <person name="Tunggal B."/>
            <person name="Kummerfeld S."/>
            <person name="Madera M."/>
            <person name="Konfortov B.A."/>
            <person name="Rivero F."/>
            <person name="Bankier A.T."/>
            <person name="Lehmann R."/>
            <person name="Hamlin N."/>
            <person name="Davies R."/>
            <person name="Gaudet P."/>
            <person name="Fey P."/>
            <person name="Pilcher K."/>
            <person name="Chen G."/>
            <person name="Saunders D."/>
            <person name="Sodergren E.J."/>
            <person name="Davis P."/>
            <person name="Kerhornou A."/>
            <person name="Nie X."/>
            <person name="Hall N."/>
            <person name="Anjard C."/>
            <person name="Hemphill L."/>
            <person name="Bason N."/>
            <person name="Farbrother P."/>
            <person name="Desany B."/>
            <person name="Just E."/>
            <person name="Morio T."/>
            <person name="Rost R."/>
            <person name="Churcher C.M."/>
            <person name="Cooper J."/>
            <person name="Haydock S."/>
            <person name="van Driessche N."/>
            <person name="Cronin A."/>
            <person name="Goodhead I."/>
            <person name="Muzny D.M."/>
            <person name="Mourier T."/>
            <person name="Pain A."/>
            <person name="Lu M."/>
            <person name="Harper D."/>
            <person name="Lindsay R."/>
            <person name="Hauser H."/>
            <person name="James K.D."/>
            <person name="Quiles M."/>
            <person name="Madan Babu M."/>
            <person name="Saito T."/>
            <person name="Buchrieser C."/>
            <person name="Wardroper A."/>
            <person name="Felder M."/>
            <person name="Thangavelu M."/>
            <person name="Johnson D."/>
            <person name="Knights A."/>
            <person name="Loulseged H."/>
            <person name="Mungall K.L."/>
            <person name="Oliver K."/>
            <person name="Price C."/>
            <person name="Quail M.A."/>
            <person name="Urushihara H."/>
            <person name="Hernandez J."/>
            <person name="Rabbinowitsch E."/>
            <person name="Steffen D."/>
            <person name="Sanders M."/>
            <person name="Ma J."/>
            <person name="Kohara Y."/>
            <person name="Sharp S."/>
            <person name="Simmonds M.N."/>
            <person name="Spiegler S."/>
            <person name="Tivey A."/>
            <person name="Sugano S."/>
            <person name="White B."/>
            <person name="Walker D."/>
            <person name="Woodward J.R."/>
            <person name="Winckler T."/>
            <person name="Tanaka Y."/>
            <person name="Shaulsky G."/>
            <person name="Schleicher M."/>
            <person name="Weinstock G.M."/>
            <person name="Rosenthal A."/>
            <person name="Cox E.C."/>
            <person name="Chisholm R.L."/>
            <person name="Gibbs R.A."/>
            <person name="Loomis W.F."/>
            <person name="Platzer M."/>
            <person name="Kay R.R."/>
            <person name="Williams J.G."/>
            <person name="Dear P.H."/>
            <person name="Noegel A.A."/>
            <person name="Barrell B.G."/>
            <person name="Kuspa A."/>
        </authorList>
    </citation>
    <scope>NUCLEOTIDE SEQUENCE [LARGE SCALE GENOMIC DNA]</scope>
    <source>
        <strain>AX4</strain>
    </source>
</reference>
<name>PSA3_DICDI</name>
<comment type="function">
    <text>The proteasome is a multicatalytic proteinase complex which is characterized by its ability to cleave peptides with Arg, Phe, Tyr, Leu, and Glu adjacent to the leaving group at neutral or slightly basic pH. The proteasome has an ATP-dependent proteolytic activity.</text>
</comment>
<comment type="subunit">
    <text evidence="1">The 26S proteasome consists of a 20S proteasome core and two 19S regulatory subunits. The 20S proteasome core is composed of 28 subunits that are arranged in four stacked rings, resulting in a barrel-shaped structure. The two end rings are each formed by seven alpha subunits, and the two central rings are each formed by seven beta subunits. The catalytic chamber with the active sites is on the inside of the barrel (By similarity).</text>
</comment>
<comment type="subcellular location">
    <subcellularLocation>
        <location evidence="1">Cytoplasm</location>
    </subcellularLocation>
    <subcellularLocation>
        <location evidence="1">Nucleus</location>
    </subcellularLocation>
</comment>
<comment type="similarity">
    <text evidence="2">Belongs to the peptidase T1A family.</text>
</comment>
<accession>Q27563</accession>
<accession>Q55GT1</accession>
<protein>
    <recommendedName>
        <fullName>Proteasome subunit alpha type-3</fullName>
    </recommendedName>
</protein>